<sequence>MSDTKTAPAYDTPIGLTNPPIDELLERTSSKYALVIYAAKRARQINDYYNQLGDGILEYVGPLVEPGLQEKPLSVALREIHADLLEHSEGE</sequence>
<proteinExistence type="inferred from homology"/>
<evidence type="ECO:0000255" key="1">
    <source>
        <dbReference type="HAMAP-Rule" id="MF_00366"/>
    </source>
</evidence>
<protein>
    <recommendedName>
        <fullName evidence="1">DNA-directed RNA polymerase subunit omega</fullName>
        <shortName evidence="1">RNAP omega subunit</shortName>
        <ecNumber evidence="1">2.7.7.6</ecNumber>
    </recommendedName>
    <alternativeName>
        <fullName evidence="1">RNA polymerase omega subunit</fullName>
    </alternativeName>
    <alternativeName>
        <fullName evidence="1">Transcriptase subunit omega</fullName>
    </alternativeName>
</protein>
<organism>
    <name type="scientific">Nocardia farcinica (strain IFM 10152)</name>
    <dbReference type="NCBI Taxonomy" id="247156"/>
    <lineage>
        <taxon>Bacteria</taxon>
        <taxon>Bacillati</taxon>
        <taxon>Actinomycetota</taxon>
        <taxon>Actinomycetes</taxon>
        <taxon>Mycobacteriales</taxon>
        <taxon>Nocardiaceae</taxon>
        <taxon>Nocardia</taxon>
    </lineage>
</organism>
<gene>
    <name evidence="1" type="primary">rpoZ</name>
    <name type="ordered locus">NFA_36150</name>
</gene>
<keyword id="KW-0240">DNA-directed RNA polymerase</keyword>
<keyword id="KW-0548">Nucleotidyltransferase</keyword>
<keyword id="KW-1185">Reference proteome</keyword>
<keyword id="KW-0804">Transcription</keyword>
<keyword id="KW-0808">Transferase</keyword>
<reference key="1">
    <citation type="journal article" date="2004" name="Proc. Natl. Acad. Sci. U.S.A.">
        <title>The complete genomic sequence of Nocardia farcinica IFM 10152.</title>
        <authorList>
            <person name="Ishikawa J."/>
            <person name="Yamashita A."/>
            <person name="Mikami Y."/>
            <person name="Hoshino Y."/>
            <person name="Kurita H."/>
            <person name="Hotta K."/>
            <person name="Shiba T."/>
            <person name="Hattori M."/>
        </authorList>
    </citation>
    <scope>NUCLEOTIDE SEQUENCE [LARGE SCALE GENOMIC DNA]</scope>
    <source>
        <strain>IFM 10152</strain>
    </source>
</reference>
<dbReference type="EC" id="2.7.7.6" evidence="1"/>
<dbReference type="EMBL" id="AP006618">
    <property type="protein sequence ID" value="BAD58463.1"/>
    <property type="molecule type" value="Genomic_DNA"/>
</dbReference>
<dbReference type="RefSeq" id="WP_011210148.1">
    <property type="nucleotide sequence ID" value="NC_006361.1"/>
</dbReference>
<dbReference type="SMR" id="Q5YTM8"/>
<dbReference type="STRING" id="247156.NFA_36150"/>
<dbReference type="GeneID" id="61134311"/>
<dbReference type="KEGG" id="nfa:NFA_36150"/>
<dbReference type="eggNOG" id="COG1758">
    <property type="taxonomic scope" value="Bacteria"/>
</dbReference>
<dbReference type="HOGENOM" id="CLU_125406_1_1_11"/>
<dbReference type="OrthoDB" id="8481372at2"/>
<dbReference type="Proteomes" id="UP000006820">
    <property type="component" value="Chromosome"/>
</dbReference>
<dbReference type="GO" id="GO:0000428">
    <property type="term" value="C:DNA-directed RNA polymerase complex"/>
    <property type="evidence" value="ECO:0007669"/>
    <property type="project" value="UniProtKB-KW"/>
</dbReference>
<dbReference type="GO" id="GO:0003677">
    <property type="term" value="F:DNA binding"/>
    <property type="evidence" value="ECO:0007669"/>
    <property type="project" value="UniProtKB-UniRule"/>
</dbReference>
<dbReference type="GO" id="GO:0003899">
    <property type="term" value="F:DNA-directed RNA polymerase activity"/>
    <property type="evidence" value="ECO:0007669"/>
    <property type="project" value="UniProtKB-UniRule"/>
</dbReference>
<dbReference type="GO" id="GO:0006351">
    <property type="term" value="P:DNA-templated transcription"/>
    <property type="evidence" value="ECO:0007669"/>
    <property type="project" value="UniProtKB-UniRule"/>
</dbReference>
<dbReference type="FunFam" id="3.90.940.10:FF:000002">
    <property type="entry name" value="DNA-directed RNA polymerase subunit omega"/>
    <property type="match status" value="1"/>
</dbReference>
<dbReference type="Gene3D" id="3.90.940.10">
    <property type="match status" value="1"/>
</dbReference>
<dbReference type="HAMAP" id="MF_00366">
    <property type="entry name" value="RNApol_bact_RpoZ"/>
    <property type="match status" value="1"/>
</dbReference>
<dbReference type="InterPro" id="IPR003716">
    <property type="entry name" value="DNA-dir_RNA_pol_omega"/>
</dbReference>
<dbReference type="InterPro" id="IPR006110">
    <property type="entry name" value="Pol_omega/Rpo6/RPB6"/>
</dbReference>
<dbReference type="InterPro" id="IPR036161">
    <property type="entry name" value="RPB6/omega-like_sf"/>
</dbReference>
<dbReference type="NCBIfam" id="TIGR00690">
    <property type="entry name" value="rpoZ"/>
    <property type="match status" value="1"/>
</dbReference>
<dbReference type="PANTHER" id="PTHR34476">
    <property type="entry name" value="DNA-DIRECTED RNA POLYMERASE SUBUNIT OMEGA"/>
    <property type="match status" value="1"/>
</dbReference>
<dbReference type="PANTHER" id="PTHR34476:SF1">
    <property type="entry name" value="DNA-DIRECTED RNA POLYMERASE SUBUNIT OMEGA"/>
    <property type="match status" value="1"/>
</dbReference>
<dbReference type="Pfam" id="PF01192">
    <property type="entry name" value="RNA_pol_Rpb6"/>
    <property type="match status" value="1"/>
</dbReference>
<dbReference type="SMART" id="SM01409">
    <property type="entry name" value="RNA_pol_Rpb6"/>
    <property type="match status" value="1"/>
</dbReference>
<dbReference type="SUPFAM" id="SSF63562">
    <property type="entry name" value="RPB6/omega subunit-like"/>
    <property type="match status" value="1"/>
</dbReference>
<comment type="function">
    <text evidence="1">Promotes RNA polymerase assembly. Latches the N- and C-terminal regions of the beta' subunit thereby facilitating its interaction with the beta and alpha subunits.</text>
</comment>
<comment type="catalytic activity">
    <reaction evidence="1">
        <text>RNA(n) + a ribonucleoside 5'-triphosphate = RNA(n+1) + diphosphate</text>
        <dbReference type="Rhea" id="RHEA:21248"/>
        <dbReference type="Rhea" id="RHEA-COMP:14527"/>
        <dbReference type="Rhea" id="RHEA-COMP:17342"/>
        <dbReference type="ChEBI" id="CHEBI:33019"/>
        <dbReference type="ChEBI" id="CHEBI:61557"/>
        <dbReference type="ChEBI" id="CHEBI:140395"/>
        <dbReference type="EC" id="2.7.7.6"/>
    </reaction>
</comment>
<comment type="subunit">
    <text evidence="1">The RNAP catalytic core consists of 2 alpha, 1 beta, 1 beta' and 1 omega subunit. When a sigma factor is associated with the core the holoenzyme is formed, which can initiate transcription.</text>
</comment>
<comment type="similarity">
    <text evidence="1">Belongs to the RNA polymerase subunit omega family.</text>
</comment>
<feature type="chain" id="PRO_0000237481" description="DNA-directed RNA polymerase subunit omega">
    <location>
        <begin position="1"/>
        <end position="91"/>
    </location>
</feature>
<accession>Q5YTM8</accession>
<name>RPOZ_NOCFA</name>